<proteinExistence type="inferred from homology"/>
<comment type="function">
    <text evidence="1">NDH shuttles electrons from NAD(P)H:plastoquinone, via FMN and iron-sulfur (Fe-S) centers, to quinones in the photosynthetic chain and possibly in a chloroplast respiratory chain. The immediate electron acceptor for the enzyme in this species is believed to be plastoquinone. Couples the redox reaction to proton translocation, and thus conserves the redox energy in a proton gradient.</text>
</comment>
<comment type="catalytic activity">
    <reaction evidence="1">
        <text>a plastoquinone + NADH + (n+1) H(+)(in) = a plastoquinol + NAD(+) + n H(+)(out)</text>
        <dbReference type="Rhea" id="RHEA:42608"/>
        <dbReference type="Rhea" id="RHEA-COMP:9561"/>
        <dbReference type="Rhea" id="RHEA-COMP:9562"/>
        <dbReference type="ChEBI" id="CHEBI:15378"/>
        <dbReference type="ChEBI" id="CHEBI:17757"/>
        <dbReference type="ChEBI" id="CHEBI:57540"/>
        <dbReference type="ChEBI" id="CHEBI:57945"/>
        <dbReference type="ChEBI" id="CHEBI:62192"/>
    </reaction>
</comment>
<comment type="catalytic activity">
    <reaction evidence="1">
        <text>a plastoquinone + NADPH + (n+1) H(+)(in) = a plastoquinol + NADP(+) + n H(+)(out)</text>
        <dbReference type="Rhea" id="RHEA:42612"/>
        <dbReference type="Rhea" id="RHEA-COMP:9561"/>
        <dbReference type="Rhea" id="RHEA-COMP:9562"/>
        <dbReference type="ChEBI" id="CHEBI:15378"/>
        <dbReference type="ChEBI" id="CHEBI:17757"/>
        <dbReference type="ChEBI" id="CHEBI:57783"/>
        <dbReference type="ChEBI" id="CHEBI:58349"/>
        <dbReference type="ChEBI" id="CHEBI:62192"/>
    </reaction>
</comment>
<comment type="subunit">
    <text evidence="1">NDH is composed of at least 16 different subunits, 5 of which are encoded in the nucleus.</text>
</comment>
<comment type="subcellular location">
    <subcellularLocation>
        <location evidence="1">Plastid</location>
        <location evidence="1">Chloroplast thylakoid membrane</location>
        <topology evidence="1">Peripheral membrane protein</topology>
        <orientation evidence="1">Stromal side</orientation>
    </subcellularLocation>
</comment>
<comment type="similarity">
    <text evidence="1">Belongs to the complex I 30 kDa subunit family.</text>
</comment>
<gene>
    <name evidence="1" type="primary">ndhJ</name>
</gene>
<name>NDHJ_LIRTU</name>
<reference key="1">
    <citation type="journal article" date="2006" name="BMC Evol. Biol.">
        <title>Complete plastid genome sequences of Drimys, Liriodendron, and Piper: implications for the phylogenetic relationships of magnoliids.</title>
        <authorList>
            <person name="Cai Z."/>
            <person name="Penaflor C."/>
            <person name="Kuehl J.V."/>
            <person name="Leebens-Mack J."/>
            <person name="Carlson J.E."/>
            <person name="dePamphilis C.W."/>
            <person name="Boore J.L."/>
            <person name="Jansen R.K."/>
        </authorList>
    </citation>
    <scope>NUCLEOTIDE SEQUENCE [LARGE SCALE GENOMIC DNA]</scope>
</reference>
<organism>
    <name type="scientific">Liriodendron tulipifera</name>
    <name type="common">Tuliptree</name>
    <name type="synonym">Tulip poplar</name>
    <dbReference type="NCBI Taxonomy" id="3415"/>
    <lineage>
        <taxon>Eukaryota</taxon>
        <taxon>Viridiplantae</taxon>
        <taxon>Streptophyta</taxon>
        <taxon>Embryophyta</taxon>
        <taxon>Tracheophyta</taxon>
        <taxon>Spermatophyta</taxon>
        <taxon>Magnoliopsida</taxon>
        <taxon>Magnoliidae</taxon>
        <taxon>Magnoliales</taxon>
        <taxon>Magnoliaceae</taxon>
        <taxon>Liriodendron</taxon>
    </lineage>
</organism>
<feature type="chain" id="PRO_0000358278" description="NAD(P)H-quinone oxidoreductase subunit J, chloroplastic">
    <location>
        <begin position="1"/>
        <end position="158"/>
    </location>
</feature>
<accession>Q0G9L6</accession>
<sequence>MQGRSSAWLVKHELVHRSLGFDYQGIETLQIKPEDWYSIAVISYVYGYNYLRSQCAYDVAPGGLLASVYHLTKIEYGVDQPEEVCIKVFAPRRNPRIPSVFWIWKSADFQERESYDMLGISYENHPRLKRILMPESWIGWPLRKDYIAPNFYEIQDAY</sequence>
<protein>
    <recommendedName>
        <fullName evidence="1">NAD(P)H-quinone oxidoreductase subunit J, chloroplastic</fullName>
        <ecNumber evidence="1">7.1.1.-</ecNumber>
    </recommendedName>
    <alternativeName>
        <fullName>NAD(P)H dehydrogenase subunit J</fullName>
    </alternativeName>
    <alternativeName>
        <fullName evidence="1">NADH-plastoquinone oxidoreductase subunit J</fullName>
    </alternativeName>
</protein>
<dbReference type="EC" id="7.1.1.-" evidence="1"/>
<dbReference type="EMBL" id="DQ899947">
    <property type="protein sequence ID" value="ABI32512.1"/>
    <property type="molecule type" value="Genomic_DNA"/>
</dbReference>
<dbReference type="RefSeq" id="YP_740205.1">
    <property type="nucleotide sequence ID" value="NC_008326.1"/>
</dbReference>
<dbReference type="SMR" id="Q0G9L6"/>
<dbReference type="GeneID" id="4266625"/>
<dbReference type="GO" id="GO:0009535">
    <property type="term" value="C:chloroplast thylakoid membrane"/>
    <property type="evidence" value="ECO:0007669"/>
    <property type="project" value="UniProtKB-SubCell"/>
</dbReference>
<dbReference type="GO" id="GO:0008137">
    <property type="term" value="F:NADH dehydrogenase (ubiquinone) activity"/>
    <property type="evidence" value="ECO:0007669"/>
    <property type="project" value="InterPro"/>
</dbReference>
<dbReference type="GO" id="GO:0048038">
    <property type="term" value="F:quinone binding"/>
    <property type="evidence" value="ECO:0007669"/>
    <property type="project" value="UniProtKB-KW"/>
</dbReference>
<dbReference type="GO" id="GO:0019684">
    <property type="term" value="P:photosynthesis, light reaction"/>
    <property type="evidence" value="ECO:0007669"/>
    <property type="project" value="UniProtKB-UniRule"/>
</dbReference>
<dbReference type="FunFam" id="3.30.460.80:FF:000004">
    <property type="entry name" value="NAD(P)H-quinone oxidoreductase subunit J, chloroplastic"/>
    <property type="match status" value="1"/>
</dbReference>
<dbReference type="Gene3D" id="3.30.460.80">
    <property type="entry name" value="NADH:ubiquinone oxidoreductase, 30kDa subunit"/>
    <property type="match status" value="1"/>
</dbReference>
<dbReference type="HAMAP" id="MF_01357">
    <property type="entry name" value="NDH1_NuoC"/>
    <property type="match status" value="1"/>
</dbReference>
<dbReference type="InterPro" id="IPR010218">
    <property type="entry name" value="NADH_DH_suC"/>
</dbReference>
<dbReference type="InterPro" id="IPR037232">
    <property type="entry name" value="NADH_quin_OxRdtase_su_C/D-like"/>
</dbReference>
<dbReference type="InterPro" id="IPR001268">
    <property type="entry name" value="NADH_UbQ_OxRdtase_30kDa_su"/>
</dbReference>
<dbReference type="InterPro" id="IPR020396">
    <property type="entry name" value="NADH_UbQ_OxRdtase_CS"/>
</dbReference>
<dbReference type="NCBIfam" id="NF009141">
    <property type="entry name" value="PRK12494.1"/>
    <property type="match status" value="1"/>
</dbReference>
<dbReference type="PANTHER" id="PTHR10884:SF14">
    <property type="entry name" value="NADH DEHYDROGENASE [UBIQUINONE] IRON-SULFUR PROTEIN 3, MITOCHONDRIAL"/>
    <property type="match status" value="1"/>
</dbReference>
<dbReference type="PANTHER" id="PTHR10884">
    <property type="entry name" value="NADH DEHYDROGENASE UBIQUINONE IRON-SULFUR PROTEIN 3"/>
    <property type="match status" value="1"/>
</dbReference>
<dbReference type="Pfam" id="PF00329">
    <property type="entry name" value="Complex1_30kDa"/>
    <property type="match status" value="1"/>
</dbReference>
<dbReference type="SUPFAM" id="SSF143243">
    <property type="entry name" value="Nqo5-like"/>
    <property type="match status" value="1"/>
</dbReference>
<dbReference type="PROSITE" id="PS00542">
    <property type="entry name" value="COMPLEX1_30K"/>
    <property type="match status" value="1"/>
</dbReference>
<keyword id="KW-0150">Chloroplast</keyword>
<keyword id="KW-0472">Membrane</keyword>
<keyword id="KW-0520">NAD</keyword>
<keyword id="KW-0521">NADP</keyword>
<keyword id="KW-0934">Plastid</keyword>
<keyword id="KW-0618">Plastoquinone</keyword>
<keyword id="KW-0874">Quinone</keyword>
<keyword id="KW-0793">Thylakoid</keyword>
<keyword id="KW-1278">Translocase</keyword>
<keyword id="KW-0813">Transport</keyword>
<evidence type="ECO:0000255" key="1">
    <source>
        <dbReference type="HAMAP-Rule" id="MF_01357"/>
    </source>
</evidence>
<geneLocation type="chloroplast"/>